<proteinExistence type="evidence at protein level"/>
<feature type="chain" id="PRO_0000196435" description="DNA replication and repair protein RecF">
    <location>
        <begin position="1"/>
        <end position="385"/>
    </location>
</feature>
<feature type="binding site" evidence="2">
    <location>
        <begin position="30"/>
        <end position="37"/>
    </location>
    <ligand>
        <name>ATP</name>
        <dbReference type="ChEBI" id="CHEBI:30616"/>
    </ligand>
</feature>
<accession>P9WHI9</accession>
<accession>L0T293</accession>
<accession>P77896</accession>
<accession>Q59586</accession>
<organism>
    <name type="scientific">Mycobacterium tuberculosis (strain ATCC 25618 / H37Rv)</name>
    <dbReference type="NCBI Taxonomy" id="83332"/>
    <lineage>
        <taxon>Bacteria</taxon>
        <taxon>Bacillati</taxon>
        <taxon>Actinomycetota</taxon>
        <taxon>Actinomycetes</taxon>
        <taxon>Mycobacteriales</taxon>
        <taxon>Mycobacteriaceae</taxon>
        <taxon>Mycobacterium</taxon>
        <taxon>Mycobacterium tuberculosis complex</taxon>
    </lineage>
</organism>
<name>RECF_MYCTU</name>
<comment type="function">
    <text evidence="1">The RecF protein is involved in DNA metabolism; it is required for DNA replication and normal SOS inducibility. RecF binds preferentially to single-stranded, linear DNA. It also seems to bind ATP (By similarity).</text>
</comment>
<comment type="subunit">
    <text evidence="3">Co-immunoprecipitates with DarG in the presence and absence of darT.</text>
</comment>
<comment type="subcellular location">
    <subcellularLocation>
        <location evidence="1">Cytoplasm</location>
    </subcellularLocation>
</comment>
<comment type="similarity">
    <text evidence="4">Belongs to the RecF family.</text>
</comment>
<dbReference type="EMBL" id="X92504">
    <property type="protein sequence ID" value="CAA63259.1"/>
    <property type="molecule type" value="Genomic_DNA"/>
</dbReference>
<dbReference type="EMBL" id="AL123456">
    <property type="protein sequence ID" value="CCP42725.1"/>
    <property type="molecule type" value="Genomic_DNA"/>
</dbReference>
<dbReference type="PIR" id="S70984">
    <property type="entry name" value="S70984"/>
</dbReference>
<dbReference type="RefSeq" id="NP_214517.1">
    <property type="nucleotide sequence ID" value="NC_000962.3"/>
</dbReference>
<dbReference type="RefSeq" id="WP_003912365.1">
    <property type="nucleotide sequence ID" value="NZ_NVQJ01000005.1"/>
</dbReference>
<dbReference type="SMR" id="P9WHI9"/>
<dbReference type="FunCoup" id="P9WHI9">
    <property type="interactions" value="15"/>
</dbReference>
<dbReference type="STRING" id="83332.Rv0003"/>
<dbReference type="PaxDb" id="83332-Rv0003"/>
<dbReference type="DNASU" id="887089"/>
<dbReference type="GeneID" id="887089"/>
<dbReference type="KEGG" id="mtu:Rv0003"/>
<dbReference type="KEGG" id="mtv:RVBD_0003"/>
<dbReference type="TubercuList" id="Rv0003"/>
<dbReference type="eggNOG" id="COG1195">
    <property type="taxonomic scope" value="Bacteria"/>
</dbReference>
<dbReference type="InParanoid" id="P9WHI9"/>
<dbReference type="OrthoDB" id="9803889at2"/>
<dbReference type="PhylomeDB" id="P9WHI9"/>
<dbReference type="Proteomes" id="UP000001584">
    <property type="component" value="Chromosome"/>
</dbReference>
<dbReference type="GO" id="GO:0005829">
    <property type="term" value="C:cytosol"/>
    <property type="evidence" value="ECO:0007005"/>
    <property type="project" value="MTBBASE"/>
</dbReference>
<dbReference type="GO" id="GO:0005886">
    <property type="term" value="C:plasma membrane"/>
    <property type="evidence" value="ECO:0007005"/>
    <property type="project" value="MTBBASE"/>
</dbReference>
<dbReference type="GO" id="GO:0005524">
    <property type="term" value="F:ATP binding"/>
    <property type="evidence" value="ECO:0007669"/>
    <property type="project" value="UniProtKB-UniRule"/>
</dbReference>
<dbReference type="GO" id="GO:0003697">
    <property type="term" value="F:single-stranded DNA binding"/>
    <property type="evidence" value="ECO:0007669"/>
    <property type="project" value="UniProtKB-UniRule"/>
</dbReference>
<dbReference type="GO" id="GO:0006260">
    <property type="term" value="P:DNA replication"/>
    <property type="evidence" value="ECO:0007669"/>
    <property type="project" value="UniProtKB-UniRule"/>
</dbReference>
<dbReference type="GO" id="GO:0000731">
    <property type="term" value="P:DNA synthesis involved in DNA repair"/>
    <property type="evidence" value="ECO:0000318"/>
    <property type="project" value="GO_Central"/>
</dbReference>
<dbReference type="GO" id="GO:0006302">
    <property type="term" value="P:double-strand break repair"/>
    <property type="evidence" value="ECO:0000318"/>
    <property type="project" value="GO_Central"/>
</dbReference>
<dbReference type="GO" id="GO:0009432">
    <property type="term" value="P:SOS response"/>
    <property type="evidence" value="ECO:0007669"/>
    <property type="project" value="UniProtKB-UniRule"/>
</dbReference>
<dbReference type="CDD" id="cd03242">
    <property type="entry name" value="ABC_RecF"/>
    <property type="match status" value="1"/>
</dbReference>
<dbReference type="Gene3D" id="3.40.50.300">
    <property type="entry name" value="P-loop containing nucleotide triphosphate hydrolases"/>
    <property type="match status" value="1"/>
</dbReference>
<dbReference type="Gene3D" id="1.20.1050.90">
    <property type="entry name" value="RecF/RecN/SMC, N-terminal domain"/>
    <property type="match status" value="1"/>
</dbReference>
<dbReference type="HAMAP" id="MF_00365">
    <property type="entry name" value="RecF"/>
    <property type="match status" value="1"/>
</dbReference>
<dbReference type="InterPro" id="IPR001238">
    <property type="entry name" value="DNA-binding_RecF"/>
</dbReference>
<dbReference type="InterPro" id="IPR018078">
    <property type="entry name" value="DNA-binding_RecF_CS"/>
</dbReference>
<dbReference type="InterPro" id="IPR027417">
    <property type="entry name" value="P-loop_NTPase"/>
</dbReference>
<dbReference type="InterPro" id="IPR003395">
    <property type="entry name" value="RecF/RecN/SMC_N"/>
</dbReference>
<dbReference type="InterPro" id="IPR042174">
    <property type="entry name" value="RecF_2"/>
</dbReference>
<dbReference type="NCBIfam" id="TIGR00611">
    <property type="entry name" value="recf"/>
    <property type="match status" value="1"/>
</dbReference>
<dbReference type="PANTHER" id="PTHR32182">
    <property type="entry name" value="DNA REPLICATION AND REPAIR PROTEIN RECF"/>
    <property type="match status" value="1"/>
</dbReference>
<dbReference type="PANTHER" id="PTHR32182:SF0">
    <property type="entry name" value="DNA REPLICATION AND REPAIR PROTEIN RECF"/>
    <property type="match status" value="1"/>
</dbReference>
<dbReference type="Pfam" id="PF02463">
    <property type="entry name" value="SMC_N"/>
    <property type="match status" value="1"/>
</dbReference>
<dbReference type="SUPFAM" id="SSF52540">
    <property type="entry name" value="P-loop containing nucleoside triphosphate hydrolases"/>
    <property type="match status" value="1"/>
</dbReference>
<dbReference type="PROSITE" id="PS00617">
    <property type="entry name" value="RECF_1"/>
    <property type="match status" value="1"/>
</dbReference>
<dbReference type="PROSITE" id="PS00618">
    <property type="entry name" value="RECF_2"/>
    <property type="match status" value="1"/>
</dbReference>
<evidence type="ECO:0000250" key="1"/>
<evidence type="ECO:0000255" key="2"/>
<evidence type="ECO:0000269" key="3">
    <source>
    </source>
</evidence>
<evidence type="ECO:0000305" key="4"/>
<protein>
    <recommendedName>
        <fullName>DNA replication and repair protein RecF</fullName>
    </recommendedName>
</protein>
<gene>
    <name type="primary">recF</name>
    <name type="ordered locus">Rv0003</name>
    <name type="ORF">MTCY10H4.01</name>
</gene>
<keyword id="KW-0067">ATP-binding</keyword>
<keyword id="KW-0963">Cytoplasm</keyword>
<keyword id="KW-0227">DNA damage</keyword>
<keyword id="KW-0234">DNA repair</keyword>
<keyword id="KW-0235">DNA replication</keyword>
<keyword id="KW-0238">DNA-binding</keyword>
<keyword id="KW-0547">Nucleotide-binding</keyword>
<keyword id="KW-1185">Reference proteome</keyword>
<keyword id="KW-0742">SOS response</keyword>
<reference key="1">
    <citation type="journal article" date="1996" name="Mol. Microbiol.">
        <title>Organization of the origins of replication of the chromosomes of Mycobacterium smegmatis, Mycobacterium leprae and Mycobacterium tuberculosis and isolation of a functional origin from M. smegmatis.</title>
        <authorList>
            <person name="Salazar L."/>
            <person name="Fsihi H."/>
            <person name="De Rossi E."/>
            <person name="Riccardi G."/>
            <person name="Rios C."/>
            <person name="Cole S.T."/>
            <person name="Takiff H.E."/>
        </authorList>
    </citation>
    <scope>NUCLEOTIDE SEQUENCE [GENOMIC DNA]</scope>
    <source>
        <strain>ATCC 25618 / H37Rv</strain>
    </source>
</reference>
<reference key="2">
    <citation type="journal article" date="1998" name="Nature">
        <title>Deciphering the biology of Mycobacterium tuberculosis from the complete genome sequence.</title>
        <authorList>
            <person name="Cole S.T."/>
            <person name="Brosch R."/>
            <person name="Parkhill J."/>
            <person name="Garnier T."/>
            <person name="Churcher C.M."/>
            <person name="Harris D.E."/>
            <person name="Gordon S.V."/>
            <person name="Eiglmeier K."/>
            <person name="Gas S."/>
            <person name="Barry C.E. III"/>
            <person name="Tekaia F."/>
            <person name="Badcock K."/>
            <person name="Basham D."/>
            <person name="Brown D."/>
            <person name="Chillingworth T."/>
            <person name="Connor R."/>
            <person name="Davies R.M."/>
            <person name="Devlin K."/>
            <person name="Feltwell T."/>
            <person name="Gentles S."/>
            <person name="Hamlin N."/>
            <person name="Holroyd S."/>
            <person name="Hornsby T."/>
            <person name="Jagels K."/>
            <person name="Krogh A."/>
            <person name="McLean J."/>
            <person name="Moule S."/>
            <person name="Murphy L.D."/>
            <person name="Oliver S."/>
            <person name="Osborne J."/>
            <person name="Quail M.A."/>
            <person name="Rajandream M.A."/>
            <person name="Rogers J."/>
            <person name="Rutter S."/>
            <person name="Seeger K."/>
            <person name="Skelton S."/>
            <person name="Squares S."/>
            <person name="Squares R."/>
            <person name="Sulston J.E."/>
            <person name="Taylor K."/>
            <person name="Whitehead S."/>
            <person name="Barrell B.G."/>
        </authorList>
    </citation>
    <scope>NUCLEOTIDE SEQUENCE [LARGE SCALE GENOMIC DNA]</scope>
    <source>
        <strain>ATCC 25618 / H37Rv</strain>
    </source>
</reference>
<reference key="3">
    <citation type="journal article" date="2011" name="Mol. Cell. Proteomics">
        <title>Proteogenomic analysis of Mycobacterium tuberculosis by high resolution mass spectrometry.</title>
        <authorList>
            <person name="Kelkar D.S."/>
            <person name="Kumar D."/>
            <person name="Kumar P."/>
            <person name="Balakrishnan L."/>
            <person name="Muthusamy B."/>
            <person name="Yadav A.K."/>
            <person name="Shrivastava P."/>
            <person name="Marimuthu A."/>
            <person name="Anand S."/>
            <person name="Sundaram H."/>
            <person name="Kingsbury R."/>
            <person name="Harsha H.C."/>
            <person name="Nair B."/>
            <person name="Prasad T.S."/>
            <person name="Chauhan D.S."/>
            <person name="Katoch K."/>
            <person name="Katoch V.M."/>
            <person name="Kumar P."/>
            <person name="Chaerkady R."/>
            <person name="Ramachandran S."/>
            <person name="Dash D."/>
            <person name="Pandey A."/>
        </authorList>
    </citation>
    <scope>IDENTIFICATION BY MASS SPECTROMETRY [LARGE SCALE ANALYSIS]</scope>
    <source>
        <strain>ATCC 25618 / H37Rv</strain>
    </source>
</reference>
<reference key="4">
    <citation type="journal article" date="2020" name="Mol. Microbiol.">
        <title>Depletion of the DarG antitoxin in Mycobacterium tuberculosis triggers the DNA-damage response and leads to cell death.</title>
        <authorList>
            <person name="Zaveri A."/>
            <person name="Wang R."/>
            <person name="Botella L."/>
            <person name="Sharma R."/>
            <person name="Zhu L."/>
            <person name="Wallach J.B."/>
            <person name="Song N."/>
            <person name="Jansen R.S."/>
            <person name="Rhee K.Y."/>
            <person name="Ehrt S."/>
            <person name="Schnappinger D."/>
        </authorList>
    </citation>
    <scope>SUBUNIT</scope>
    <source>
        <strain>H37Rv</strain>
    </source>
</reference>
<sequence length="385" mass="42212">MYVRHLGLRDFRSWACVDLELHPGRTVFVGPNGYGKTNLIEALWYSTTLGSHRVSADLPLIRVGTDRAVISTIVVNDGRECAVDLEIATGRVNKARLNRSSVRSTRDVVGVLRAVLFAPEDLGLVRGDPADRRRYLDDLAIVRRPAIAAVRAEYERVLRQRTALLKSVPGARYRGDRGVFDTLEVWDSRLAEHGAELVAARIDLVNQLAPEVKKAYQLLAPESRSASIGYRASMDVTGPSEQSDIDRQLLAARLLAALAARRDAELERGVCLVGPHRDDLILRLGDQPAKGFASHGEAWSLAVALRLAAYQLLRVDGGEPVLLLDDVFAELDVMRRRALATAAESAEQVLVTAAVLEDIPAGWDARRVHIDVRADDTGSMSVVLP</sequence>